<protein>
    <recommendedName>
        <fullName evidence="4">Electron transfer flavoprotein regulatory factor 1 homolog</fullName>
    </recommendedName>
    <alternativeName>
        <fullName evidence="3">Protein orsai</fullName>
    </alternativeName>
</protein>
<accession>Q9VJG4</accession>
<organism>
    <name type="scientific">Drosophila melanogaster</name>
    <name type="common">Fruit fly</name>
    <dbReference type="NCBI Taxonomy" id="7227"/>
    <lineage>
        <taxon>Eukaryota</taxon>
        <taxon>Metazoa</taxon>
        <taxon>Ecdysozoa</taxon>
        <taxon>Arthropoda</taxon>
        <taxon>Hexapoda</taxon>
        <taxon>Insecta</taxon>
        <taxon>Pterygota</taxon>
        <taxon>Neoptera</taxon>
        <taxon>Endopterygota</taxon>
        <taxon>Diptera</taxon>
        <taxon>Brachycera</taxon>
        <taxon>Muscomorpha</taxon>
        <taxon>Ephydroidea</taxon>
        <taxon>Drosophilidae</taxon>
        <taxon>Drosophila</taxon>
        <taxon>Sophophora</taxon>
    </lineage>
</organism>
<dbReference type="EMBL" id="AE014134">
    <property type="protein sequence ID" value="AAF53585.1"/>
    <property type="molecule type" value="Genomic_DNA"/>
</dbReference>
<dbReference type="EMBL" id="AE014134">
    <property type="protein sequence ID" value="AHN54515.1"/>
    <property type="molecule type" value="Genomic_DNA"/>
</dbReference>
<dbReference type="EMBL" id="AY118795">
    <property type="protein sequence ID" value="AAM50655.1"/>
    <property type="molecule type" value="mRNA"/>
</dbReference>
<dbReference type="EMBL" id="KX531796">
    <property type="protein sequence ID" value="ANY27606.1"/>
    <property type="molecule type" value="mRNA"/>
</dbReference>
<dbReference type="RefSeq" id="NP_001286001.1">
    <property type="nucleotide sequence ID" value="NM_001299072.1"/>
</dbReference>
<dbReference type="RefSeq" id="NP_652578.1">
    <property type="nucleotide sequence ID" value="NM_144321.3"/>
</dbReference>
<dbReference type="SMR" id="Q9VJG4"/>
<dbReference type="FunCoup" id="Q9VJG4">
    <property type="interactions" value="631"/>
</dbReference>
<dbReference type="STRING" id="7227.FBpp0311571"/>
<dbReference type="PaxDb" id="7227-FBpp0080512"/>
<dbReference type="DNASU" id="50459"/>
<dbReference type="EnsemblMetazoa" id="FBtr0080959">
    <property type="protein sequence ID" value="FBpp0080512"/>
    <property type="gene ID" value="FBgn0040985"/>
</dbReference>
<dbReference type="EnsemblMetazoa" id="FBtr0345447">
    <property type="protein sequence ID" value="FBpp0311571"/>
    <property type="gene ID" value="FBgn0040985"/>
</dbReference>
<dbReference type="GeneID" id="50459"/>
<dbReference type="KEGG" id="dme:Dmel_CG6115"/>
<dbReference type="UCSC" id="CG6115-RA">
    <property type="organism name" value="d. melanogaster"/>
</dbReference>
<dbReference type="AGR" id="FB:FBgn0040985"/>
<dbReference type="CTD" id="50459"/>
<dbReference type="FlyBase" id="FBgn0040985">
    <property type="gene designation" value="osi"/>
</dbReference>
<dbReference type="VEuPathDB" id="VectorBase:FBgn0040985"/>
<dbReference type="eggNOG" id="ENOG502S4S4">
    <property type="taxonomic scope" value="Eukaryota"/>
</dbReference>
<dbReference type="GeneTree" id="ENSGT00390000001810"/>
<dbReference type="HOGENOM" id="CLU_141157_2_1_1"/>
<dbReference type="InParanoid" id="Q9VJG4"/>
<dbReference type="OMA" id="PLGYQYF"/>
<dbReference type="OrthoDB" id="5485677at2759"/>
<dbReference type="BioGRID-ORCS" id="50459">
    <property type="hits" value="0 hits in 1 CRISPR screen"/>
</dbReference>
<dbReference type="Proteomes" id="UP000000803">
    <property type="component" value="Chromosome 2L"/>
</dbReference>
<dbReference type="Bgee" id="FBgn0040985">
    <property type="expression patterns" value="Expressed in head capsule and 266 other cell types or tissues"/>
</dbReference>
<dbReference type="GO" id="GO:0005739">
    <property type="term" value="C:mitochondrion"/>
    <property type="evidence" value="ECO:0000250"/>
    <property type="project" value="FlyBase"/>
</dbReference>
<dbReference type="GO" id="GO:0004857">
    <property type="term" value="F:enzyme inhibitor activity"/>
    <property type="evidence" value="ECO:0000316"/>
    <property type="project" value="FlyBase"/>
</dbReference>
<dbReference type="GO" id="GO:0090324">
    <property type="term" value="P:negative regulation of oxidative phosphorylation"/>
    <property type="evidence" value="ECO:0000315"/>
    <property type="project" value="FlyBase"/>
</dbReference>
<dbReference type="GO" id="GO:0022904">
    <property type="term" value="P:respiratory electron transport chain"/>
    <property type="evidence" value="ECO:0000318"/>
    <property type="project" value="GO_Central"/>
</dbReference>
<dbReference type="CDD" id="cd20265">
    <property type="entry name" value="Complex1_LYR_ETFRF1_LYRM5"/>
    <property type="match status" value="1"/>
</dbReference>
<dbReference type="InterPro" id="IPR008011">
    <property type="entry name" value="Complex1_LYR_dom"/>
</dbReference>
<dbReference type="InterPro" id="IPR045296">
    <property type="entry name" value="Complex1_LYR_ETFRF1_LYRM5"/>
</dbReference>
<dbReference type="InterPro" id="IPR052000">
    <property type="entry name" value="ETFRF1"/>
</dbReference>
<dbReference type="PANTHER" id="PTHR21024:SF0">
    <property type="entry name" value="ELECTRON TRANSFER FLAVOPROTEIN REGULATORY FACTOR 1"/>
    <property type="match status" value="1"/>
</dbReference>
<dbReference type="PANTHER" id="PTHR21024">
    <property type="entry name" value="GROWTH HORMONE-INDUCIBLE SOLUBLE PROTEIN-RELATED"/>
    <property type="match status" value="1"/>
</dbReference>
<dbReference type="Pfam" id="PF05347">
    <property type="entry name" value="Complex1_LYR"/>
    <property type="match status" value="1"/>
</dbReference>
<gene>
    <name evidence="3 6" type="primary">osi</name>
    <name evidence="6" type="ORF">CG6115</name>
</gene>
<feature type="chain" id="PRO_0000462115" description="Electron transfer flavoprotein regulatory factor 1 homolog">
    <location>
        <begin position="1"/>
        <end position="85"/>
    </location>
</feature>
<proteinExistence type="evidence at transcript level"/>
<sequence>MSQLRSKVISLYKHLQYLGREYPGLNGPQKFRKQIHDAFMNHKDEQDPKKIVALLAQGRYLAKEVEALYSLKKYRSVKQRYSYND</sequence>
<reference key="1">
    <citation type="journal article" date="2000" name="Science">
        <title>The genome sequence of Drosophila melanogaster.</title>
        <authorList>
            <person name="Adams M.D."/>
            <person name="Celniker S.E."/>
            <person name="Holt R.A."/>
            <person name="Evans C.A."/>
            <person name="Gocayne J.D."/>
            <person name="Amanatides P.G."/>
            <person name="Scherer S.E."/>
            <person name="Li P.W."/>
            <person name="Hoskins R.A."/>
            <person name="Galle R.F."/>
            <person name="George R.A."/>
            <person name="Lewis S.E."/>
            <person name="Richards S."/>
            <person name="Ashburner M."/>
            <person name="Henderson S.N."/>
            <person name="Sutton G.G."/>
            <person name="Wortman J.R."/>
            <person name="Yandell M.D."/>
            <person name="Zhang Q."/>
            <person name="Chen L.X."/>
            <person name="Brandon R.C."/>
            <person name="Rogers Y.-H.C."/>
            <person name="Blazej R.G."/>
            <person name="Champe M."/>
            <person name="Pfeiffer B.D."/>
            <person name="Wan K.H."/>
            <person name="Doyle C."/>
            <person name="Baxter E.G."/>
            <person name="Helt G."/>
            <person name="Nelson C.R."/>
            <person name="Miklos G.L.G."/>
            <person name="Abril J.F."/>
            <person name="Agbayani A."/>
            <person name="An H.-J."/>
            <person name="Andrews-Pfannkoch C."/>
            <person name="Baldwin D."/>
            <person name="Ballew R.M."/>
            <person name="Basu A."/>
            <person name="Baxendale J."/>
            <person name="Bayraktaroglu L."/>
            <person name="Beasley E.M."/>
            <person name="Beeson K.Y."/>
            <person name="Benos P.V."/>
            <person name="Berman B.P."/>
            <person name="Bhandari D."/>
            <person name="Bolshakov S."/>
            <person name="Borkova D."/>
            <person name="Botchan M.R."/>
            <person name="Bouck J."/>
            <person name="Brokstein P."/>
            <person name="Brottier P."/>
            <person name="Burtis K.C."/>
            <person name="Busam D.A."/>
            <person name="Butler H."/>
            <person name="Cadieu E."/>
            <person name="Center A."/>
            <person name="Chandra I."/>
            <person name="Cherry J.M."/>
            <person name="Cawley S."/>
            <person name="Dahlke C."/>
            <person name="Davenport L.B."/>
            <person name="Davies P."/>
            <person name="de Pablos B."/>
            <person name="Delcher A."/>
            <person name="Deng Z."/>
            <person name="Mays A.D."/>
            <person name="Dew I."/>
            <person name="Dietz S.M."/>
            <person name="Dodson K."/>
            <person name="Doup L.E."/>
            <person name="Downes M."/>
            <person name="Dugan-Rocha S."/>
            <person name="Dunkov B.C."/>
            <person name="Dunn P."/>
            <person name="Durbin K.J."/>
            <person name="Evangelista C.C."/>
            <person name="Ferraz C."/>
            <person name="Ferriera S."/>
            <person name="Fleischmann W."/>
            <person name="Fosler C."/>
            <person name="Gabrielian A.E."/>
            <person name="Garg N.S."/>
            <person name="Gelbart W.M."/>
            <person name="Glasser K."/>
            <person name="Glodek A."/>
            <person name="Gong F."/>
            <person name="Gorrell J.H."/>
            <person name="Gu Z."/>
            <person name="Guan P."/>
            <person name="Harris M."/>
            <person name="Harris N.L."/>
            <person name="Harvey D.A."/>
            <person name="Heiman T.J."/>
            <person name="Hernandez J.R."/>
            <person name="Houck J."/>
            <person name="Hostin D."/>
            <person name="Houston K.A."/>
            <person name="Howland T.J."/>
            <person name="Wei M.-H."/>
            <person name="Ibegwam C."/>
            <person name="Jalali M."/>
            <person name="Kalush F."/>
            <person name="Karpen G.H."/>
            <person name="Ke Z."/>
            <person name="Kennison J.A."/>
            <person name="Ketchum K.A."/>
            <person name="Kimmel B.E."/>
            <person name="Kodira C.D."/>
            <person name="Kraft C.L."/>
            <person name="Kravitz S."/>
            <person name="Kulp D."/>
            <person name="Lai Z."/>
            <person name="Lasko P."/>
            <person name="Lei Y."/>
            <person name="Levitsky A.A."/>
            <person name="Li J.H."/>
            <person name="Li Z."/>
            <person name="Liang Y."/>
            <person name="Lin X."/>
            <person name="Liu X."/>
            <person name="Mattei B."/>
            <person name="McIntosh T.C."/>
            <person name="McLeod M.P."/>
            <person name="McPherson D."/>
            <person name="Merkulov G."/>
            <person name="Milshina N.V."/>
            <person name="Mobarry C."/>
            <person name="Morris J."/>
            <person name="Moshrefi A."/>
            <person name="Mount S.M."/>
            <person name="Moy M."/>
            <person name="Murphy B."/>
            <person name="Murphy L."/>
            <person name="Muzny D.M."/>
            <person name="Nelson D.L."/>
            <person name="Nelson D.R."/>
            <person name="Nelson K.A."/>
            <person name="Nixon K."/>
            <person name="Nusskern D.R."/>
            <person name="Pacleb J.M."/>
            <person name="Palazzolo M."/>
            <person name="Pittman G.S."/>
            <person name="Pan S."/>
            <person name="Pollard J."/>
            <person name="Puri V."/>
            <person name="Reese M.G."/>
            <person name="Reinert K."/>
            <person name="Remington K."/>
            <person name="Saunders R.D.C."/>
            <person name="Scheeler F."/>
            <person name="Shen H."/>
            <person name="Shue B.C."/>
            <person name="Siden-Kiamos I."/>
            <person name="Simpson M."/>
            <person name="Skupski M.P."/>
            <person name="Smith T.J."/>
            <person name="Spier E."/>
            <person name="Spradling A.C."/>
            <person name="Stapleton M."/>
            <person name="Strong R."/>
            <person name="Sun E."/>
            <person name="Svirskas R."/>
            <person name="Tector C."/>
            <person name="Turner R."/>
            <person name="Venter E."/>
            <person name="Wang A.H."/>
            <person name="Wang X."/>
            <person name="Wang Z.-Y."/>
            <person name="Wassarman D.A."/>
            <person name="Weinstock G.M."/>
            <person name="Weissenbach J."/>
            <person name="Williams S.M."/>
            <person name="Woodage T."/>
            <person name="Worley K.C."/>
            <person name="Wu D."/>
            <person name="Yang S."/>
            <person name="Yao Q.A."/>
            <person name="Ye J."/>
            <person name="Yeh R.-F."/>
            <person name="Zaveri J.S."/>
            <person name="Zhan M."/>
            <person name="Zhang G."/>
            <person name="Zhao Q."/>
            <person name="Zheng L."/>
            <person name="Zheng X.H."/>
            <person name="Zhong F.N."/>
            <person name="Zhong W."/>
            <person name="Zhou X."/>
            <person name="Zhu S.C."/>
            <person name="Zhu X."/>
            <person name="Smith H.O."/>
            <person name="Gibbs R.A."/>
            <person name="Myers E.W."/>
            <person name="Rubin G.M."/>
            <person name="Venter J.C."/>
        </authorList>
    </citation>
    <scope>NUCLEOTIDE SEQUENCE [LARGE SCALE GENOMIC DNA]</scope>
    <source>
        <strain>Berkeley</strain>
    </source>
</reference>
<reference key="2">
    <citation type="journal article" date="2002" name="Genome Biol.">
        <title>Annotation of the Drosophila melanogaster euchromatic genome: a systematic review.</title>
        <authorList>
            <person name="Misra S."/>
            <person name="Crosby M.A."/>
            <person name="Mungall C.J."/>
            <person name="Matthews B.B."/>
            <person name="Campbell K.S."/>
            <person name="Hradecky P."/>
            <person name="Huang Y."/>
            <person name="Kaminker J.S."/>
            <person name="Millburn G.H."/>
            <person name="Prochnik S.E."/>
            <person name="Smith C.D."/>
            <person name="Tupy J.L."/>
            <person name="Whitfield E.J."/>
            <person name="Bayraktaroglu L."/>
            <person name="Berman B.P."/>
            <person name="Bettencourt B.R."/>
            <person name="Celniker S.E."/>
            <person name="de Grey A.D.N.J."/>
            <person name="Drysdale R.A."/>
            <person name="Harris N.L."/>
            <person name="Richter J."/>
            <person name="Russo S."/>
            <person name="Schroeder A.J."/>
            <person name="Shu S.Q."/>
            <person name="Stapleton M."/>
            <person name="Yamada C."/>
            <person name="Ashburner M."/>
            <person name="Gelbart W.M."/>
            <person name="Rubin G.M."/>
            <person name="Lewis S.E."/>
        </authorList>
    </citation>
    <scope>GENOME REANNOTATION</scope>
    <source>
        <strain>Berkeley</strain>
    </source>
</reference>
<reference key="3">
    <citation type="journal article" date="2002" name="Genome Biol.">
        <title>A Drosophila full-length cDNA resource.</title>
        <authorList>
            <person name="Stapleton M."/>
            <person name="Carlson J.W."/>
            <person name="Brokstein P."/>
            <person name="Yu C."/>
            <person name="Champe M."/>
            <person name="George R.A."/>
            <person name="Guarin H."/>
            <person name="Kronmiller B."/>
            <person name="Pacleb J.M."/>
            <person name="Park S."/>
            <person name="Wan K.H."/>
            <person name="Rubin G.M."/>
            <person name="Celniker S.E."/>
        </authorList>
    </citation>
    <scope>NUCLEOTIDE SEQUENCE [LARGE SCALE MRNA]</scope>
    <source>
        <strain>Berkeley</strain>
        <tissue>Head</tissue>
    </source>
</reference>
<reference key="4">
    <citation type="submission" date="2016-07" db="EMBL/GenBank/DDBJ databases">
        <authorList>
            <person name="Wan K."/>
            <person name="Booth B."/>
            <person name="Spirohn K."/>
            <person name="Hao T."/>
            <person name="Hu Y."/>
            <person name="Calderwood M."/>
            <person name="Hill D."/>
            <person name="Mohr S."/>
            <person name="Vidal M."/>
            <person name="Celniker S."/>
            <person name="Perrimon N."/>
        </authorList>
    </citation>
    <scope>NUCLEOTIDE SEQUENCE [LARGE SCALE MRNA]</scope>
</reference>
<reference key="5">
    <citation type="journal article" date="2022" name="BMC Biol.">
        <title>orsai, the Drosophila homolog of human ETFRF1, links lipid catabolism to growth control.</title>
        <authorList>
            <person name="Fernandez-Acosta M."/>
            <person name="Romero J.I."/>
            <person name="Bernabo G."/>
            <person name="Velazquez-Campos G.M."/>
            <person name="Gonzalez N."/>
            <person name="Mares M.L."/>
            <person name="Werbajh S."/>
            <person name="Avendano-Vazquez L.A."/>
            <person name="Rechberger G.N."/>
            <person name="Kuehnlein R.P."/>
            <person name="Marino-Buslje C."/>
            <person name="Cantera R."/>
            <person name="Rezaval C."/>
            <person name="Ceriani M.F."/>
        </authorList>
    </citation>
    <scope>FUNCTION</scope>
    <scope>TISSUE SPECIFICITY</scope>
    <scope>DISRUPTION PHENOTYPE</scope>
</reference>
<comment type="function">
    <text evidence="1 2">Acts as a regulator of the electron transfer flavoprotein by promoting the removal of flavin from the ETF holoenzyme (By similarity). May act with the ETF complex to coordinate lipid homeostasis in the fat body in response to stage-specific demands (PubMed:36266680).</text>
</comment>
<comment type="subcellular location">
    <subcellularLocation>
        <location evidence="1">Mitochondrion</location>
    </subcellularLocation>
</comment>
<comment type="tissue specificity">
    <text evidence="2">Highly expressed in the larval fat body.</text>
</comment>
<comment type="disruption phenotype">
    <text evidence="2">Lethality during first instar larval development due to reduced lipid reserves and energy output, characterized by decreased ATP production and increased reactive oxygen species (ROS) levels (PubMed:36266680). Metabolic defects trigger defective food-seeking behavior and lethality (PubMed:36266680).</text>
</comment>
<comment type="miscellaneous">
    <text evidence="5">Was named osi after the Argentinian street language for the football term 'offside'.</text>
</comment>
<comment type="similarity">
    <text evidence="4">Belongs to the complex I LYR family.</text>
</comment>
<keyword id="KW-0496">Mitochondrion</keyword>
<keyword id="KW-1185">Reference proteome</keyword>
<evidence type="ECO:0000250" key="1">
    <source>
        <dbReference type="UniProtKB" id="Q6IPR1"/>
    </source>
</evidence>
<evidence type="ECO:0000269" key="2">
    <source>
    </source>
</evidence>
<evidence type="ECO:0000303" key="3">
    <source>
    </source>
</evidence>
<evidence type="ECO:0000305" key="4"/>
<evidence type="ECO:0000305" key="5">
    <source>
    </source>
</evidence>
<evidence type="ECO:0000312" key="6">
    <source>
        <dbReference type="FlyBase" id="FBgn0040985"/>
    </source>
</evidence>
<name>ETFR1_DROME</name>